<feature type="signal peptide" evidence="3">
    <location>
        <begin position="1"/>
        <end status="unknown"/>
    </location>
</feature>
<feature type="chain" id="PRO_0000050555" description="Stem bromelain">
    <location>
        <begin status="unknown"/>
        <end position="212"/>
    </location>
</feature>
<feature type="active site" evidence="5">
    <location>
        <position position="26"/>
    </location>
</feature>
<feature type="active site" evidence="6">
    <location>
        <position position="158"/>
    </location>
</feature>
<feature type="glycosylation site" id="CAR_000134" description="N-linked (GlcNAc...) asparagine" evidence="4">
    <location>
        <position position="117"/>
    </location>
</feature>
<feature type="disulfide bond" evidence="1">
    <location>
        <begin position="23"/>
        <end position="63"/>
    </location>
</feature>
<feature type="disulfide bond" evidence="2">
    <location>
        <begin position="57"/>
        <end position="96"/>
    </location>
</feature>
<feature type="disulfide bond" evidence="2">
    <location>
        <begin position="152"/>
        <end position="199"/>
    </location>
</feature>
<sequence>AVPQSIDWRDYGAVTSVKNQNPCGACWAFAAIATVESIYKIKKGILEPLSEQQVLDCAKGYGCKGGWEFRAFEFIISNKGVASGAIYPYKAAKGTCKTDGVPNSAYITGYARVPRNNESSMMYAVSKQPITVAVDANANFQYYKSGVFNGPCGTSLNHAVTAIGYGQDSIIYPKKWGAKWGEAGYIRMARDVSSSSGICGIAIDPLYPTLEE</sequence>
<reference key="1">
    <citation type="journal article" date="1989" name="FEBS Lett.">
        <title>Stem bromelain: amino acid sequence and implications for weak binding of cystatin.</title>
        <authorList>
            <person name="Ritonja A."/>
            <person name="Rowan A.D."/>
            <person name="Buttle D.J."/>
            <person name="Rawlings N.D."/>
            <person name="Turk V."/>
            <person name="Barrett A.J."/>
        </authorList>
    </citation>
    <scope>PROTEIN SEQUENCE</scope>
</reference>
<reference key="2">
    <citation type="journal article" date="1986" name="Glycoconj. J.">
        <title>A 500-MHz 1H-NMR study on the N-linked carbohydrate chain of bromelain. 1H-NMR structural-reporter-groups of fucose alpha(1-3)-linked to asparagine-bound N-acetylglucosamine.</title>
        <authorList>
            <person name="van Kuik J.A."/>
            <person name="Hoffmann R.A."/>
            <person name="Mutsaers J.H.G.M."/>
            <person name="van Halbeek H."/>
            <person name="Kamerling J.P."/>
            <person name="Vliegenthart J.F.G."/>
        </authorList>
    </citation>
    <scope>STRUCTURE OF CARBOHYDRATE</scope>
</reference>
<organism>
    <name type="scientific">Ananas comosus</name>
    <name type="common">Pineapple</name>
    <name type="synonym">Ananas ananas</name>
    <dbReference type="NCBI Taxonomy" id="4615"/>
    <lineage>
        <taxon>Eukaryota</taxon>
        <taxon>Viridiplantae</taxon>
        <taxon>Streptophyta</taxon>
        <taxon>Embryophyta</taxon>
        <taxon>Tracheophyta</taxon>
        <taxon>Spermatophyta</taxon>
        <taxon>Magnoliopsida</taxon>
        <taxon>Liliopsida</taxon>
        <taxon>Poales</taxon>
        <taxon>Bromeliaceae</taxon>
        <taxon>Bromelioideae</taxon>
        <taxon>Ananas</taxon>
    </lineage>
</organism>
<keyword id="KW-0903">Direct protein sequencing</keyword>
<keyword id="KW-1015">Disulfide bond</keyword>
<keyword id="KW-0325">Glycoprotein</keyword>
<keyword id="KW-0378">Hydrolase</keyword>
<keyword id="KW-0645">Protease</keyword>
<keyword id="KW-0732">Signal</keyword>
<keyword id="KW-0788">Thiol protease</keyword>
<name>BROM2_ANACO</name>
<evidence type="ECO:0000250" key="1">
    <source>
        <dbReference type="UniProtKB" id="P07858"/>
    </source>
</evidence>
<evidence type="ECO:0000250" key="2">
    <source>
        <dbReference type="UniProtKB" id="P25250"/>
    </source>
</evidence>
<evidence type="ECO:0000255" key="3"/>
<evidence type="ECO:0000255" key="4">
    <source>
        <dbReference type="PROSITE-ProRule" id="PRU00498"/>
    </source>
</evidence>
<evidence type="ECO:0000255" key="5">
    <source>
        <dbReference type="PROSITE-ProRule" id="PRU10088"/>
    </source>
</evidence>
<evidence type="ECO:0000255" key="6">
    <source>
        <dbReference type="PROSITE-ProRule" id="PRU10089"/>
    </source>
</evidence>
<evidence type="ECO:0000305" key="7"/>
<evidence type="ECO:0000305" key="8">
    <source>
    </source>
</evidence>
<proteinExistence type="evidence at protein level"/>
<accession>P14518</accession>
<dbReference type="EC" id="3.4.22.32" evidence="8"/>
<dbReference type="PIR" id="S03964">
    <property type="entry name" value="S03964"/>
</dbReference>
<dbReference type="SMR" id="P14518"/>
<dbReference type="Allergome" id="3076">
    <property type="allergen name" value="Ana c 2.0101"/>
</dbReference>
<dbReference type="MEROPS" id="C01.005"/>
<dbReference type="GlyConnect" id="75">
    <property type="glycosylation" value="2 N-Linked glycans (1 site)"/>
</dbReference>
<dbReference type="BRENDA" id="3.4.22.32">
    <property type="organism ID" value="333"/>
</dbReference>
<dbReference type="Proteomes" id="UP000515123">
    <property type="component" value="Unplaced"/>
</dbReference>
<dbReference type="GO" id="GO:0008234">
    <property type="term" value="F:cysteine-type peptidase activity"/>
    <property type="evidence" value="ECO:0007669"/>
    <property type="project" value="UniProtKB-KW"/>
</dbReference>
<dbReference type="GO" id="GO:0006508">
    <property type="term" value="P:proteolysis"/>
    <property type="evidence" value="ECO:0007669"/>
    <property type="project" value="UniProtKB-KW"/>
</dbReference>
<dbReference type="CDD" id="cd02248">
    <property type="entry name" value="Peptidase_C1A"/>
    <property type="match status" value="1"/>
</dbReference>
<dbReference type="Gene3D" id="3.90.70.10">
    <property type="entry name" value="Cysteine proteinases"/>
    <property type="match status" value="1"/>
</dbReference>
<dbReference type="InterPro" id="IPR038765">
    <property type="entry name" value="Papain-like_cys_pep_sf"/>
</dbReference>
<dbReference type="InterPro" id="IPR000169">
    <property type="entry name" value="Pept_cys_AS"/>
</dbReference>
<dbReference type="InterPro" id="IPR025660">
    <property type="entry name" value="Pept_his_AS"/>
</dbReference>
<dbReference type="InterPro" id="IPR013128">
    <property type="entry name" value="Peptidase_C1A"/>
</dbReference>
<dbReference type="InterPro" id="IPR000668">
    <property type="entry name" value="Peptidase_C1A_C"/>
</dbReference>
<dbReference type="InterPro" id="IPR039417">
    <property type="entry name" value="Peptidase_C1A_papain-like"/>
</dbReference>
<dbReference type="PANTHER" id="PTHR12411">
    <property type="entry name" value="CYSTEINE PROTEASE FAMILY C1-RELATED"/>
    <property type="match status" value="1"/>
</dbReference>
<dbReference type="Pfam" id="PF00112">
    <property type="entry name" value="Peptidase_C1"/>
    <property type="match status" value="1"/>
</dbReference>
<dbReference type="PRINTS" id="PR00705">
    <property type="entry name" value="PAPAIN"/>
</dbReference>
<dbReference type="SMART" id="SM00645">
    <property type="entry name" value="Pept_C1"/>
    <property type="match status" value="1"/>
</dbReference>
<dbReference type="SUPFAM" id="SSF54001">
    <property type="entry name" value="Cysteine proteinases"/>
    <property type="match status" value="1"/>
</dbReference>
<dbReference type="PROSITE" id="PS00139">
    <property type="entry name" value="THIOL_PROTEASE_CYS"/>
    <property type="match status" value="1"/>
</dbReference>
<dbReference type="PROSITE" id="PS00639">
    <property type="entry name" value="THIOL_PROTEASE_HIS"/>
    <property type="match status" value="1"/>
</dbReference>
<comment type="function">
    <text evidence="7">Cysteine proteinase with a high level of diversity in substrate specificity.</text>
</comment>
<comment type="catalytic activity">
    <reaction evidence="8">
        <text>Broad specificity for cleavage of proteins, but strong preference for Z-Arg-Arg-|-NHMec among small molecule substrates.</text>
        <dbReference type="EC" id="3.4.22.32"/>
    </reaction>
</comment>
<comment type="miscellaneous">
    <text>The geometry and the reactivity of the catalytic site are different from those of other cysteine proteinases.</text>
</comment>
<comment type="similarity">
    <text evidence="5 6">Belongs to the peptidase C1 family.</text>
</comment>
<protein>
    <recommendedName>
        <fullName>Stem bromelain</fullName>
        <ecNumber evidence="8">3.4.22.32</ecNumber>
    </recommendedName>
</protein>